<comment type="function">
    <text evidence="2">Component of the ubiquinol-cytochrome c reductase complex (complex III or cytochrome b-c1 complex) that is part of the mitochondrial respiratory chain. The b-c1 complex mediates electron transfer from ubiquinol to cytochrome c. Contributes to the generation of a proton gradient across the mitochondrial membrane that is then used for ATP synthesis.</text>
</comment>
<comment type="cofactor">
    <cofactor evidence="2">
        <name>heme b</name>
        <dbReference type="ChEBI" id="CHEBI:60344"/>
    </cofactor>
    <text evidence="2">Binds 2 heme b groups non-covalently.</text>
</comment>
<comment type="subunit">
    <text evidence="2">The cytochrome bc1 complex contains 11 subunits: 3 respiratory subunits (MT-CYB, CYC1 and UQCRFS1), 2 core proteins (UQCRC1 and UQCRC2) and 6 low-molecular weight proteins (UQCRH/QCR6, UQCRB/QCR7, UQCRQ/QCR8, UQCR10/QCR9, UQCR11/QCR10 and a cleavage product of UQCRFS1). This cytochrome bc1 complex then forms a dimer.</text>
</comment>
<comment type="subcellular location">
    <subcellularLocation>
        <location evidence="2">Mitochondrion inner membrane</location>
        <topology evidence="2">Multi-pass membrane protein</topology>
    </subcellularLocation>
</comment>
<comment type="miscellaneous">
    <text evidence="1">Heme 1 (or BL or b562) is low-potential and absorbs at about 562 nm, and heme 2 (or BH or b566) is high-potential and absorbs at about 566 nm.</text>
</comment>
<comment type="similarity">
    <text evidence="3 4">Belongs to the cytochrome b family.</text>
</comment>
<comment type="caution">
    <text evidence="2">The full-length protein contains only eight transmembrane helices, not nine as predicted by bioinformatics tools.</text>
</comment>
<sequence>MTIMRKSHPLMKIVNHAFIDLPTPPNISGWWNFGSLLGLCLILQIFTGLFLAMHYTSDTLTAFSSVTHICRDVNYGWLIRYLHANGASLFFMCLYIHIGRGIYYGSYLYMETWNIGILLLFLTMATAFMGYVLPWGQMSFWGATVITNLLSAMPYIGQDLVEWIWGGFSVDKATLTRFFALHFIMPFIITALVMVHLLFLHETGSNNPLGLPSDCGKVPFHPYYTTKDFMGVILLLTLFMTLVLFFPDKLGDPDNYTPANPLNTPPHIKPEWYFLFAYAILRSIPNKLGGVMALAFSILVLTLLPYLHTSKQRSLSFRPLSQTLFWMLISDVIALTWIGGQPVESPYIVIGQVASVLYFSIILIFMPIAGLIENKMLKL</sequence>
<feature type="chain" id="PRO_0000060817" description="Cytochrome b">
    <location>
        <begin position="1"/>
        <end position="379"/>
    </location>
</feature>
<feature type="transmembrane region" description="Helical" evidence="2">
    <location>
        <begin position="33"/>
        <end position="53"/>
    </location>
</feature>
<feature type="transmembrane region" description="Helical" evidence="2">
    <location>
        <begin position="77"/>
        <end position="98"/>
    </location>
</feature>
<feature type="transmembrane region" description="Helical" evidence="2">
    <location>
        <begin position="113"/>
        <end position="133"/>
    </location>
</feature>
<feature type="transmembrane region" description="Helical" evidence="2">
    <location>
        <begin position="178"/>
        <end position="198"/>
    </location>
</feature>
<feature type="transmembrane region" description="Helical" evidence="2">
    <location>
        <begin position="226"/>
        <end position="246"/>
    </location>
</feature>
<feature type="transmembrane region" description="Helical" evidence="2">
    <location>
        <begin position="288"/>
        <end position="308"/>
    </location>
</feature>
<feature type="transmembrane region" description="Helical" evidence="2">
    <location>
        <begin position="320"/>
        <end position="340"/>
    </location>
</feature>
<feature type="transmembrane region" description="Helical" evidence="2">
    <location>
        <begin position="347"/>
        <end position="367"/>
    </location>
</feature>
<feature type="binding site" description="axial binding residue" evidence="2">
    <location>
        <position position="83"/>
    </location>
    <ligand>
        <name>heme b</name>
        <dbReference type="ChEBI" id="CHEBI:60344"/>
        <label>b562</label>
    </ligand>
    <ligandPart>
        <name>Fe</name>
        <dbReference type="ChEBI" id="CHEBI:18248"/>
    </ligandPart>
</feature>
<feature type="binding site" description="axial binding residue" evidence="2">
    <location>
        <position position="97"/>
    </location>
    <ligand>
        <name>heme b</name>
        <dbReference type="ChEBI" id="CHEBI:60344"/>
        <label>b566</label>
    </ligand>
    <ligandPart>
        <name>Fe</name>
        <dbReference type="ChEBI" id="CHEBI:18248"/>
    </ligandPart>
</feature>
<feature type="binding site" description="axial binding residue" evidence="2">
    <location>
        <position position="182"/>
    </location>
    <ligand>
        <name>heme b</name>
        <dbReference type="ChEBI" id="CHEBI:60344"/>
        <label>b562</label>
    </ligand>
    <ligandPart>
        <name>Fe</name>
        <dbReference type="ChEBI" id="CHEBI:18248"/>
    </ligandPart>
</feature>
<feature type="binding site" description="axial binding residue" evidence="2">
    <location>
        <position position="196"/>
    </location>
    <ligand>
        <name>heme b</name>
        <dbReference type="ChEBI" id="CHEBI:60344"/>
        <label>b566</label>
    </ligand>
    <ligandPart>
        <name>Fe</name>
        <dbReference type="ChEBI" id="CHEBI:18248"/>
    </ligandPart>
</feature>
<feature type="binding site" evidence="2">
    <location>
        <position position="201"/>
    </location>
    <ligand>
        <name>a ubiquinone</name>
        <dbReference type="ChEBI" id="CHEBI:16389"/>
    </ligand>
</feature>
<keyword id="KW-0249">Electron transport</keyword>
<keyword id="KW-0349">Heme</keyword>
<keyword id="KW-0408">Iron</keyword>
<keyword id="KW-0472">Membrane</keyword>
<keyword id="KW-0479">Metal-binding</keyword>
<keyword id="KW-0496">Mitochondrion</keyword>
<keyword id="KW-0999">Mitochondrion inner membrane</keyword>
<keyword id="KW-0679">Respiratory chain</keyword>
<keyword id="KW-0812">Transmembrane</keyword>
<keyword id="KW-1133">Transmembrane helix</keyword>
<keyword id="KW-0813">Transport</keyword>
<keyword id="KW-0830">Ubiquinone</keyword>
<gene>
    <name type="primary">MT-CYB</name>
    <name type="synonym">COB</name>
    <name type="synonym">CYTB</name>
    <name type="synonym">MTCYB</name>
</gene>
<proteinExistence type="inferred from homology"/>
<protein>
    <recommendedName>
        <fullName>Cytochrome b</fullName>
    </recommendedName>
    <alternativeName>
        <fullName>Complex III subunit 3</fullName>
    </alternativeName>
    <alternativeName>
        <fullName>Complex III subunit III</fullName>
    </alternativeName>
    <alternativeName>
        <fullName>Cytochrome b-c1 complex subunit 3</fullName>
    </alternativeName>
    <alternativeName>
        <fullName>Ubiquinol-cytochrome-c reductase complex cytochrome b subunit</fullName>
    </alternativeName>
</protein>
<reference key="1">
    <citation type="journal article" date="1993" name="Mol. Phylogenet. Evol.">
        <title>Phylogenetic relationships of pocket gophers (Cratogeomys and Pappogeomys) based on mitochondrial DNA cytochrome b sequences.</title>
        <authorList>
            <person name="Dewalt T.S."/>
            <person name="Sudman P.D."/>
            <person name="Hafner M.S."/>
            <person name="Davis S.K."/>
        </authorList>
    </citation>
    <scope>NUCLEOTIDE SEQUENCE [GENOMIC DNA]</scope>
</reference>
<dbReference type="EMBL" id="L11904">
    <property type="protein sequence ID" value="AAA97491.1"/>
    <property type="molecule type" value="Genomic_DNA"/>
</dbReference>
<dbReference type="SMR" id="Q34106"/>
<dbReference type="GO" id="GO:0005743">
    <property type="term" value="C:mitochondrial inner membrane"/>
    <property type="evidence" value="ECO:0007669"/>
    <property type="project" value="UniProtKB-SubCell"/>
</dbReference>
<dbReference type="GO" id="GO:0045275">
    <property type="term" value="C:respiratory chain complex III"/>
    <property type="evidence" value="ECO:0007669"/>
    <property type="project" value="InterPro"/>
</dbReference>
<dbReference type="GO" id="GO:0046872">
    <property type="term" value="F:metal ion binding"/>
    <property type="evidence" value="ECO:0007669"/>
    <property type="project" value="UniProtKB-KW"/>
</dbReference>
<dbReference type="GO" id="GO:0008121">
    <property type="term" value="F:ubiquinol-cytochrome-c reductase activity"/>
    <property type="evidence" value="ECO:0007669"/>
    <property type="project" value="InterPro"/>
</dbReference>
<dbReference type="GO" id="GO:0006122">
    <property type="term" value="P:mitochondrial electron transport, ubiquinol to cytochrome c"/>
    <property type="evidence" value="ECO:0007669"/>
    <property type="project" value="TreeGrafter"/>
</dbReference>
<dbReference type="CDD" id="cd00290">
    <property type="entry name" value="cytochrome_b_C"/>
    <property type="match status" value="1"/>
</dbReference>
<dbReference type="CDD" id="cd00284">
    <property type="entry name" value="Cytochrome_b_N"/>
    <property type="match status" value="1"/>
</dbReference>
<dbReference type="FunFam" id="1.20.810.10:FF:000002">
    <property type="entry name" value="Cytochrome b"/>
    <property type="match status" value="1"/>
</dbReference>
<dbReference type="Gene3D" id="1.20.810.10">
    <property type="entry name" value="Cytochrome Bc1 Complex, Chain C"/>
    <property type="match status" value="1"/>
</dbReference>
<dbReference type="InterPro" id="IPR005798">
    <property type="entry name" value="Cyt_b/b6_C"/>
</dbReference>
<dbReference type="InterPro" id="IPR036150">
    <property type="entry name" value="Cyt_b/b6_C_sf"/>
</dbReference>
<dbReference type="InterPro" id="IPR005797">
    <property type="entry name" value="Cyt_b/b6_N"/>
</dbReference>
<dbReference type="InterPro" id="IPR027387">
    <property type="entry name" value="Cytb/b6-like_sf"/>
</dbReference>
<dbReference type="InterPro" id="IPR030689">
    <property type="entry name" value="Cytochrome_b"/>
</dbReference>
<dbReference type="InterPro" id="IPR048260">
    <property type="entry name" value="Cytochrome_b_C_euk/bac"/>
</dbReference>
<dbReference type="InterPro" id="IPR048259">
    <property type="entry name" value="Cytochrome_b_N_euk/bac"/>
</dbReference>
<dbReference type="InterPro" id="IPR016174">
    <property type="entry name" value="Di-haem_cyt_TM"/>
</dbReference>
<dbReference type="PANTHER" id="PTHR19271">
    <property type="entry name" value="CYTOCHROME B"/>
    <property type="match status" value="1"/>
</dbReference>
<dbReference type="PANTHER" id="PTHR19271:SF16">
    <property type="entry name" value="CYTOCHROME B"/>
    <property type="match status" value="1"/>
</dbReference>
<dbReference type="Pfam" id="PF00032">
    <property type="entry name" value="Cytochrom_B_C"/>
    <property type="match status" value="1"/>
</dbReference>
<dbReference type="Pfam" id="PF00033">
    <property type="entry name" value="Cytochrome_B"/>
    <property type="match status" value="1"/>
</dbReference>
<dbReference type="PIRSF" id="PIRSF038885">
    <property type="entry name" value="COB"/>
    <property type="match status" value="1"/>
</dbReference>
<dbReference type="SUPFAM" id="SSF81648">
    <property type="entry name" value="a domain/subunit of cytochrome bc1 complex (Ubiquinol-cytochrome c reductase)"/>
    <property type="match status" value="1"/>
</dbReference>
<dbReference type="SUPFAM" id="SSF81342">
    <property type="entry name" value="Transmembrane di-heme cytochromes"/>
    <property type="match status" value="1"/>
</dbReference>
<dbReference type="PROSITE" id="PS51003">
    <property type="entry name" value="CYTB_CTER"/>
    <property type="match status" value="1"/>
</dbReference>
<dbReference type="PROSITE" id="PS51002">
    <property type="entry name" value="CYTB_NTER"/>
    <property type="match status" value="1"/>
</dbReference>
<name>CYB_CRAGG</name>
<geneLocation type="mitochondrion"/>
<evidence type="ECO:0000250" key="1"/>
<evidence type="ECO:0000250" key="2">
    <source>
        <dbReference type="UniProtKB" id="P00157"/>
    </source>
</evidence>
<evidence type="ECO:0000255" key="3">
    <source>
        <dbReference type="PROSITE-ProRule" id="PRU00967"/>
    </source>
</evidence>
<evidence type="ECO:0000255" key="4">
    <source>
        <dbReference type="PROSITE-ProRule" id="PRU00968"/>
    </source>
</evidence>
<organism>
    <name type="scientific">Cratogeomys goldmani goldmani</name>
    <name type="common">Pappogeomys goldmani goldmani</name>
    <dbReference type="NCBI Taxonomy" id="13459"/>
    <lineage>
        <taxon>Eukaryota</taxon>
        <taxon>Metazoa</taxon>
        <taxon>Chordata</taxon>
        <taxon>Craniata</taxon>
        <taxon>Vertebrata</taxon>
        <taxon>Euteleostomi</taxon>
        <taxon>Mammalia</taxon>
        <taxon>Eutheria</taxon>
        <taxon>Euarchontoglires</taxon>
        <taxon>Glires</taxon>
        <taxon>Rodentia</taxon>
        <taxon>Castorimorpha</taxon>
        <taxon>Geomyidae</taxon>
        <taxon>Cratogeomys</taxon>
    </lineage>
</organism>
<accession>Q34106</accession>